<dbReference type="EMBL" id="CP000151">
    <property type="protein sequence ID" value="ABB07684.1"/>
    <property type="molecule type" value="Genomic_DNA"/>
</dbReference>
<dbReference type="RefSeq" id="WP_011351265.1">
    <property type="nucleotide sequence ID" value="NC_007510.1"/>
</dbReference>
<dbReference type="SMR" id="Q39IN2"/>
<dbReference type="GeneID" id="45093984"/>
<dbReference type="KEGG" id="bur:Bcep18194_A4087"/>
<dbReference type="PATRIC" id="fig|482957.22.peg.971"/>
<dbReference type="HOGENOM" id="CLU_067812_0_1_4"/>
<dbReference type="Proteomes" id="UP000002705">
    <property type="component" value="Chromosome 1"/>
</dbReference>
<dbReference type="GO" id="GO:0000902">
    <property type="term" value="P:cell morphogenesis"/>
    <property type="evidence" value="ECO:0007669"/>
    <property type="project" value="InterPro"/>
</dbReference>
<dbReference type="GO" id="GO:0000917">
    <property type="term" value="P:division septum assembly"/>
    <property type="evidence" value="ECO:0007669"/>
    <property type="project" value="UniProtKB-KW"/>
</dbReference>
<dbReference type="GO" id="GO:0051302">
    <property type="term" value="P:regulation of cell division"/>
    <property type="evidence" value="ECO:0007669"/>
    <property type="project" value="InterPro"/>
</dbReference>
<dbReference type="GO" id="GO:1901891">
    <property type="term" value="P:regulation of cell septum assembly"/>
    <property type="evidence" value="ECO:0007669"/>
    <property type="project" value="InterPro"/>
</dbReference>
<dbReference type="Gene3D" id="2.160.20.70">
    <property type="match status" value="1"/>
</dbReference>
<dbReference type="Gene3D" id="3.30.70.260">
    <property type="match status" value="1"/>
</dbReference>
<dbReference type="HAMAP" id="MF_00267">
    <property type="entry name" value="MinC"/>
    <property type="match status" value="1"/>
</dbReference>
<dbReference type="InterPro" id="IPR016098">
    <property type="entry name" value="CAP/MinC_C"/>
</dbReference>
<dbReference type="InterPro" id="IPR013033">
    <property type="entry name" value="MinC"/>
</dbReference>
<dbReference type="InterPro" id="IPR036145">
    <property type="entry name" value="MinC_C_sf"/>
</dbReference>
<dbReference type="InterPro" id="IPR007874">
    <property type="entry name" value="MinC_N"/>
</dbReference>
<dbReference type="InterPro" id="IPR005526">
    <property type="entry name" value="Septum_form_inhib_MinC_C"/>
</dbReference>
<dbReference type="NCBIfam" id="TIGR01222">
    <property type="entry name" value="minC"/>
    <property type="match status" value="1"/>
</dbReference>
<dbReference type="PANTHER" id="PTHR34108">
    <property type="entry name" value="SEPTUM SITE-DETERMINING PROTEIN MINC"/>
    <property type="match status" value="1"/>
</dbReference>
<dbReference type="PANTHER" id="PTHR34108:SF1">
    <property type="entry name" value="SEPTUM SITE-DETERMINING PROTEIN MINC"/>
    <property type="match status" value="1"/>
</dbReference>
<dbReference type="Pfam" id="PF03775">
    <property type="entry name" value="MinC_C"/>
    <property type="match status" value="1"/>
</dbReference>
<dbReference type="Pfam" id="PF05209">
    <property type="entry name" value="MinC_N"/>
    <property type="match status" value="1"/>
</dbReference>
<dbReference type="SUPFAM" id="SSF63848">
    <property type="entry name" value="Cell-division inhibitor MinC, C-terminal domain"/>
    <property type="match status" value="1"/>
</dbReference>
<organism>
    <name type="scientific">Burkholderia lata (strain ATCC 17760 / DSM 23089 / LMG 22485 / NCIMB 9086 / R18194 / 383)</name>
    <dbReference type="NCBI Taxonomy" id="482957"/>
    <lineage>
        <taxon>Bacteria</taxon>
        <taxon>Pseudomonadati</taxon>
        <taxon>Pseudomonadota</taxon>
        <taxon>Betaproteobacteria</taxon>
        <taxon>Burkholderiales</taxon>
        <taxon>Burkholderiaceae</taxon>
        <taxon>Burkholderia</taxon>
        <taxon>Burkholderia cepacia complex</taxon>
    </lineage>
</organism>
<comment type="function">
    <text evidence="1">Cell division inhibitor that blocks the formation of polar Z ring septums. Rapidly oscillates between the poles of the cell to destabilize FtsZ filaments that have formed before they mature into polar Z rings. Prevents FtsZ polymerization.</text>
</comment>
<comment type="subunit">
    <text evidence="1">Interacts with MinD and FtsZ.</text>
</comment>
<comment type="similarity">
    <text evidence="1">Belongs to the MinC family.</text>
</comment>
<accession>Q39IN2</accession>
<gene>
    <name evidence="1" type="primary">minC</name>
    <name type="ordered locus">Bcep18194_A4087</name>
</gene>
<name>MINC_BURL3</name>
<keyword id="KW-0131">Cell cycle</keyword>
<keyword id="KW-0132">Cell division</keyword>
<keyword id="KW-0717">Septation</keyword>
<reference key="1">
    <citation type="submission" date="2005-10" db="EMBL/GenBank/DDBJ databases">
        <title>Complete sequence of chromosome 1 of Burkholderia sp. 383.</title>
        <authorList>
            <consortium name="US DOE Joint Genome Institute"/>
            <person name="Copeland A."/>
            <person name="Lucas S."/>
            <person name="Lapidus A."/>
            <person name="Barry K."/>
            <person name="Detter J.C."/>
            <person name="Glavina T."/>
            <person name="Hammon N."/>
            <person name="Israni S."/>
            <person name="Pitluck S."/>
            <person name="Chain P."/>
            <person name="Malfatti S."/>
            <person name="Shin M."/>
            <person name="Vergez L."/>
            <person name="Schmutz J."/>
            <person name="Larimer F."/>
            <person name="Land M."/>
            <person name="Kyrpides N."/>
            <person name="Lykidis A."/>
            <person name="Richardson P."/>
        </authorList>
    </citation>
    <scope>NUCLEOTIDE SEQUENCE [LARGE SCALE GENOMIC DNA]</scope>
    <source>
        <strain>ATCC 17760 / DSM 23089 / LMG 22485 / NCIMB 9086 / R18194 / 383</strain>
    </source>
</reference>
<proteinExistence type="inferred from homology"/>
<evidence type="ECO:0000255" key="1">
    <source>
        <dbReference type="HAMAP-Rule" id="MF_00267"/>
    </source>
</evidence>
<protein>
    <recommendedName>
        <fullName evidence="1">Probable septum site-determining protein MinC</fullName>
    </recommendedName>
</protein>
<sequence length="257" mass="27769">MSLKKSPFFELRSGSVDTLLFTVKTTDLDALRTELVKRFEATPEFFADDVVAIDVRRLADGERVALADIRQMLNDVRMRPVGVVALATQGWAGEAGLPLLEARDRRTPAAKHADEAEPAPAPVVEAAAAPAAESAQEPAPTLLHAGGRTLVIDRPLRSGQQIYAKGDLVVLAPVSHGAEIIAEGNIHIYAPLRGRALAGVHGNHDARIFCTCLEPELISIAGIYRTTENPLPAEVLGKSVQIRLEEEKLMIEPLRLT</sequence>
<feature type="chain" id="PRO_1000047818" description="Probable septum site-determining protein MinC">
    <location>
        <begin position="1"/>
        <end position="257"/>
    </location>
</feature>